<organism>
    <name type="scientific">Bremia lactucae</name>
    <name type="common">Lettuce downy mildew</name>
    <dbReference type="NCBI Taxonomy" id="4779"/>
    <lineage>
        <taxon>Eukaryota</taxon>
        <taxon>Sar</taxon>
        <taxon>Stramenopiles</taxon>
        <taxon>Oomycota</taxon>
        <taxon>Peronosporales</taxon>
        <taxon>Peronosporaceae</taxon>
        <taxon>Bremia</taxon>
    </lineage>
</organism>
<reference key="1">
    <citation type="journal article" date="2019" name="Mol. Plant Pathol.">
        <title>Recognition of lettuce downy mildew effector BLR38 in Lactuca serriola LS102 requires two unlinked loci.</title>
        <authorList>
            <person name="Pelgrom A.J.E."/>
            <person name="Eikelhof J."/>
            <person name="Elberse J."/>
            <person name="Meisrimler C.N."/>
            <person name="Raedts R."/>
            <person name="Klein J."/>
            <person name="Van den Ackerveken G."/>
        </authorList>
    </citation>
    <scope>NUCLEOTIDE SEQUENCE [MRNA]</scope>
    <scope>DOMAIN</scope>
    <source>
        <strain>Race Bl:24</strain>
    </source>
</reference>
<reference key="2">
    <citation type="journal article" date="2019" name="Plant J.">
        <title>Multiple downy mildew effectors target the stress-related NAC transcription factor LsNAC069 in lettuce.</title>
        <authorList>
            <person name="Meisrimler C.N."/>
            <person name="Pelgrom A.J.E."/>
            <person name="Oud B."/>
            <person name="Out S."/>
            <person name="Van den Ackerveken G."/>
        </authorList>
    </citation>
    <scope>INTERACTION WITH NAC069</scope>
    <scope>FUNCTION</scope>
</reference>
<comment type="function">
    <text evidence="2">Secreted effector that inhibits stress-induced relocalization of the transcription factor NAC069 to the nucleus, thus affecting its broad role in abiotic and biotic stress responses.</text>
</comment>
<comment type="subunit">
    <text evidence="2">Interacts with host transcription factor NAC069.</text>
</comment>
<comment type="subcellular location">
    <subcellularLocation>
        <location evidence="2">Secreted</location>
    </subcellularLocation>
    <subcellularLocation>
        <location evidence="6">Host membrane</location>
        <topology evidence="1">Single-pass type I membrane protein</topology>
    </subcellularLocation>
</comment>
<comment type="domain">
    <text evidence="5">Has the canonical EER motif, but lacks the canonical translocation motif RxLR, which characterizes most oomycete effectors identified so far.</text>
</comment>
<comment type="similarity">
    <text evidence="4">Belongs to the RxLR effector family.</text>
</comment>
<sequence>MATMRRICFLFVFNLAVATSTQGISDEISPDIPETSQAVIDGHRLKGSSKVSKATTGSEERFIRSQLQFLINKIFGARGVAKVLVEEGPKSGVFNKLKEILVKISKFEMKGDMLYMVYIYTILFLSIPIILGVAMYINHHVESSYIH</sequence>
<feature type="signal peptide" evidence="1">
    <location>
        <begin position="1"/>
        <end position="23"/>
    </location>
</feature>
<feature type="chain" id="PRO_5017692030" description="Secreted RxLR effector protein BLN04">
    <location>
        <begin position="24"/>
        <end position="147"/>
    </location>
</feature>
<feature type="transmembrane region" description="Helical" evidence="1">
    <location>
        <begin position="117"/>
        <end position="137"/>
    </location>
</feature>
<feature type="short sequence motif" description="dEER" evidence="5">
    <location>
        <begin position="58"/>
        <end position="61"/>
    </location>
</feature>
<evidence type="ECO:0000255" key="1"/>
<evidence type="ECO:0000269" key="2">
    <source>
    </source>
</evidence>
<evidence type="ECO:0000303" key="3">
    <source>
    </source>
</evidence>
<evidence type="ECO:0000305" key="4"/>
<evidence type="ECO:0000305" key="5">
    <source>
    </source>
</evidence>
<evidence type="ECO:0000305" key="6">
    <source>
    </source>
</evidence>
<proteinExistence type="evidence at protein level"/>
<accession>A0A3B7TNF2</accession>
<protein>
    <recommendedName>
        <fullName evidence="3">Secreted RxLR effector protein BLN04</fullName>
    </recommendedName>
</protein>
<name>BLN04_BRELC</name>
<gene>
    <name evidence="3" type="primary">BLN04</name>
</gene>
<keyword id="KW-1043">Host membrane</keyword>
<keyword id="KW-0472">Membrane</keyword>
<keyword id="KW-0964">Secreted</keyword>
<keyword id="KW-0732">Signal</keyword>
<keyword id="KW-0812">Transmembrane</keyword>
<keyword id="KW-1133">Transmembrane helix</keyword>
<dbReference type="EMBL" id="MG686576">
    <property type="protein sequence ID" value="AYE92120.1"/>
    <property type="molecule type" value="mRNA"/>
</dbReference>
<dbReference type="VEuPathDB" id="FungiDB:CCR75_008813"/>
<dbReference type="GO" id="GO:0005576">
    <property type="term" value="C:extracellular region"/>
    <property type="evidence" value="ECO:0007669"/>
    <property type="project" value="UniProtKB-SubCell"/>
</dbReference>
<dbReference type="GO" id="GO:0033644">
    <property type="term" value="C:host cell membrane"/>
    <property type="evidence" value="ECO:0007669"/>
    <property type="project" value="UniProtKB-SubCell"/>
</dbReference>
<dbReference type="GO" id="GO:0016020">
    <property type="term" value="C:membrane"/>
    <property type="evidence" value="ECO:0007669"/>
    <property type="project" value="UniProtKB-KW"/>
</dbReference>